<proteinExistence type="evidence at protein level"/>
<comment type="function">
    <text evidence="2 3 11 18 20">Receptor tyrosine kinase involved in the development and the maturation of the central and peripheral nervous systems through regulation of proliferation, differentiation and survival of sympathetic and nervous neurons. High affinity receptor for NGF which is its primary ligand (PubMed:1312719, PubMed:1850821, PubMed:31440771). Can also bind and be activated by NTF3/neurotrophin-3. However, NTF3 only supports axonal extension through NTRK1 but has no effect on neuron survival. Upon dimeric NGF ligand-binding, undergoes homodimerization, autophosphorylation and activation. Recruits, phosphorylates and/or activates several downstream effectors including SHC1, FRS2, SH2B1, SH2B2 and PLCG1 that regulate distinct overlapping signaling cascades driving cell survival and differentiation. Through SHC1 and FRS2 activates a GRB2-Ras-MAPK cascade that regulates cell differentiation and survival. Through PLCG1 controls NF-Kappa-B activation and the transcription of genes involved in cell survival. Through SHC1 and SH2B1 controls a Ras-PI3 kinase-AKT1 signaling cascade that is also regulating survival. In absence of ligand and activation, may promote cell death, making the survival of neurons dependent on trophic factors.</text>
</comment>
<comment type="catalytic activity">
    <reaction evidence="7">
        <text>L-tyrosyl-[protein] + ATP = O-phospho-L-tyrosyl-[protein] + ADP + H(+)</text>
        <dbReference type="Rhea" id="RHEA:10596"/>
        <dbReference type="Rhea" id="RHEA-COMP:10136"/>
        <dbReference type="Rhea" id="RHEA-COMP:20101"/>
        <dbReference type="ChEBI" id="CHEBI:15378"/>
        <dbReference type="ChEBI" id="CHEBI:30616"/>
        <dbReference type="ChEBI" id="CHEBI:46858"/>
        <dbReference type="ChEBI" id="CHEBI:61978"/>
        <dbReference type="ChEBI" id="CHEBI:456216"/>
        <dbReference type="EC" id="2.7.10.1"/>
    </reaction>
</comment>
<comment type="activity regulation">
    <text evidence="3">The pro-survival signaling effect of NTRK1 in neurons requires its endocytosis into signaling early endosomes and its retrograde axonal transport. This is regulated by different proteins including CFL1, RAC1 and SORT1. NTF3 is unable to induce this signaling probably due to the lability of the NTF3-NTRK1 complex in endosomes (By similarity). SH2D1A inhibits the autophosphorylation of the receptor, and alters the recruitment and activation of downstream effectors and signaling cascades. Regulated by NGFR (By similarity).</text>
</comment>
<comment type="subunit">
    <text evidence="2 8 9 10 12 13 14 15 16 17 19 21 22 23 24">Exists in a dynamic equilibrium between monomeric (low affinity) and dimeric (high affinity) structures. Homodimerization is induced by binding of a NGF dimer (By similarity). Found in a complex, at least composed of KIDINS220, MAGI2, NTRK1 and RAPGEF2; the complex is mainly formed at late endosomes in a nerve growth factor (NGF)-dependent manner (PubMed:17724123). Interacts with RAPGEF2; the interaction is strengthened after NGF stimulation (PubMed:17724123). Interacts with SQSTM1; bridges NTRK1 to NGFR. Forms a ternary complex with NGFR and KIDINS220; this complex is affected by the expression levels of KIDINS220 and an increase in KIDINS220 expression leads to a decreased association of NGFR and NTRK1. Interacts (phosphorylated upon activation by NGF) with SHC1; mediates SHC1 phosphorylation and activation. Interacts (phosphorylated upon activation by NGF) with PLCG1; mediates PLCG1 phosphorylation and activation. Interacts (phosphorylated) with SH2B1 and SH2B2. Interacts with GRB2. Interacts with PIK3R1. Interacts with FRS2. Interacts with SORT1; may regulate NTRK1 anterograde axonal transport. Interacts with SH2D1A; regulates NTRK1. Interacts with NRADD (PubMed:18624909). Interacts with RAB7A (PubMed:16306406). Interacts with PTPRS (PubMed:17967490). Interacts with USP36; USP36 does not deubiquitinate NTRK1 (By similarity). Interacts with GGA3 (PubMed:26446845). Interacts with TSPAN1; this interaction promotes NTRK1 stability (PubMed:31440771).</text>
</comment>
<comment type="interaction">
    <interactant intactId="EBI-976667">
        <id>P35739</id>
    </interactant>
    <interactant intactId="EBI-401775">
        <id>P62994</id>
        <label>Grb2</label>
    </interactant>
    <organismsDiffer>false</organismsDiffer>
    <experiments>6</experiments>
</comment>
<comment type="interaction">
    <interactant intactId="EBI-976667">
        <id>P35739</id>
    </interactant>
    <interactant intactId="EBI-1038810">
        <id>P07174</id>
        <label>Ngfr</label>
    </interactant>
    <organismsDiffer>false</organismsDiffer>
    <experiments>2</experiments>
</comment>
<comment type="subcellular location">
    <subcellularLocation>
        <location evidence="11 15 18 21 22">Cell membrane</location>
        <topology evidence="26">Single-pass type I membrane protein</topology>
    </subcellularLocation>
    <subcellularLocation>
        <location evidence="16 21">Early endosome membrane</location>
        <topology evidence="25">Single-pass type I membrane protein</topology>
    </subcellularLocation>
    <subcellularLocation>
        <location evidence="16 21">Late endosome membrane</location>
        <topology evidence="25">Single-pass type I membrane protein</topology>
    </subcellularLocation>
    <subcellularLocation>
        <location evidence="21">Recycling endosome membrane</location>
        <topology evidence="25">Single-pass type I membrane protein</topology>
    </subcellularLocation>
    <text evidence="16 21">Internalized to endosomes upon binding of NGF or NTF3 and further transported to the cell body via a retrograde axonal transport. Localized at cell membrane and early endosomes before nerve growth factor (NGF) stimulation (PubMed:17724123, PubMed:26446845). Recruited to late endosomes after NGF stimulation (PubMed:17724123, PubMed:26446845). Colocalized with RAPGEF2 at late endosomes (PubMed:17724123).</text>
</comment>
<comment type="alternative products">
    <event type="alternative splicing"/>
    <isoform>
        <id>P35739-1</id>
        <name>TrkA-II</name>
        <sequence type="displayed"/>
    </isoform>
    <isoform>
        <id>P35739-2</id>
        <name>TrkA-I</name>
        <sequence type="described" ref="VSP_002900"/>
    </isoform>
    <text>Both isoforms have similar biological properties.</text>
</comment>
<comment type="tissue specificity">
    <text>Isoform Trka-II is primarily expressed in neuronal cells; isoform Trka-I is found in non-neuronal tissues.</text>
</comment>
<comment type="domain">
    <text evidence="10 12 13">The transmembrane domain mediates interaction with KIDINS220.</text>
</comment>
<comment type="domain">
    <text evidence="13">The extracellular domain mediates interaction with NGFR.</text>
</comment>
<comment type="PTM">
    <text>Ligand-mediated autophosphorylation. Interaction with SQSTM1 is phosphotyrosine-dependent. Autophosphorylation at Tyr-499 mediates interaction and phosphorylation of SHC1.</text>
</comment>
<comment type="PTM">
    <text evidence="2">N-glycosylated.</text>
</comment>
<comment type="PTM">
    <text evidence="2 3">Ubiquitinated. Undergoes polyubiquitination upon activation; regulated by NGFR. Ubiquitination by NEDD4L leads to degradation (By similarity). Ubiquitination regulates the internalization of the receptor (By similarity).</text>
</comment>
<comment type="similarity">
    <text evidence="6">Belongs to the protein kinase superfamily. Tyr protein kinase family. Insulin receptor subfamily.</text>
</comment>
<accession>P35739</accession>
<name>NTRK1_RAT</name>
<sequence length="799" mass="87868">MLRGQRHGQLGWHRPAAGLGGLVTSLMLACACAASCRETCCPVGPSGLRCTRAGTLNTLRGLRGAGNLTELYVENQRDLQRLEFEDLQGLGELRSLTIVKSGLRFVAPDAFHFTPRLSHLNLSSNALESLSWKTVQGLSLQDLTLSGNPLHCSCALLWLQRWEQEDLCGVYTQKLQGSGSGDQFLPLGHNNSCGVPSVKIQMPNDSVEVGDDVFLQCQVEGQALQQADWILTELEGTATMKKSGDLPSLGLTLVNVTSDLNKKNVTCWAENDVGRAEVSVQVSVSFPASVHLGKAVEQHHWCIPFSVDGQPAPSLRWFFNGSVLNETSFIFTQFLESALTNETMRHGCLRLNQPTHVNNGNYTLLAANPYGQAAASIMAAFMDNPFEFNPEDPIPVSFSPVDTNSTSRDPVEKKDETPFGVSVAVGLAVSAALFLSALLLVLNKCGQRSKFGINRPAVLAPEDGLAMSLHFMTLGGSSLSPTEGKGSGLQGHIMENPQYFSDTCVHHIKRQDIILKWELGEGAFGKVFLAECYNLLNDQDKMLVAVKALKETSENARQDFHREAELLTMLQHQHIVRFFGVCTEGGPLLMVFEYMRHGDLNRFLRSHGPDAKLLAGGEDVAPGPLGLGQLLAVASQVAAGMVYLASLHFVHRDLATRNCLVGQGLVVKIGDFGMSRDIYSTDYYRVGGRTMLPIRWMPPESILYRKFSTESDVWSFGVVLWEIFTYGKQPWYQLSNTEAIECITQGRELERPRACPPDVYAIMRGCWQREPQQRLSMKDVHARLQALAQAPPSYLDVLG</sequence>
<protein>
    <recommendedName>
        <fullName>High affinity nerve growth factor receptor</fullName>
        <ecNumber>2.7.10.1</ecNumber>
    </recommendedName>
    <alternativeName>
        <fullName>Neurotrophic tyrosine kinase receptor type 1</fullName>
    </alternativeName>
    <alternativeName>
        <fullName>Slow nerve growth factor receptor</fullName>
    </alternativeName>
    <alternativeName>
        <fullName>p140-TrkA</fullName>
        <shortName>Trk-A</shortName>
    </alternativeName>
</protein>
<reference key="1">
    <citation type="journal article" date="1992" name="Proc. Natl. Acad. Sci. U.S.A.">
        <title>The rat trk protooncogene product exhibits properties characteristic of the slow nerve growth factor receptor.</title>
        <authorList>
            <person name="Meakin S.O."/>
            <person name="Suter U."/>
            <person name="Drinkwater C.C."/>
            <person name="Welcher A.A."/>
            <person name="Shooter E.M."/>
        </authorList>
    </citation>
    <scope>NUCLEOTIDE SEQUENCE [MRNA] (ISOFORM TRKA-II)</scope>
    <scope>FUNCTION AS RECEPTOR FOR NGF</scope>
    <scope>SUBCELLULAR LOCATION</scope>
</reference>
<reference key="2">
    <citation type="journal article" date="1993" name="J. Biol. Chem.">
        <title>Tissue-specific alternative splicing generates two isoforms of the trkA receptor.</title>
        <authorList>
            <person name="Barker P.A."/>
            <person name="Lomen-Hoerth C."/>
            <person name="Gensch E.M."/>
            <person name="Meakin S.O."/>
            <person name="Glass D.J."/>
            <person name="Shooter E.M."/>
        </authorList>
    </citation>
    <scope>ALTERNATIVE SPLICING (ISOFORMS TRKA-I AND TRKA-II)</scope>
</reference>
<reference key="3">
    <citation type="journal article" date="1991" name="Nature">
        <title>High-affinity NGF binding requires coexpression of the trk proto-oncogene and the low-affinity NGF receptor.</title>
        <authorList>
            <person name="Hempstead B.L."/>
            <person name="Martin-Zanca D."/>
            <person name="Kaplan D.R."/>
            <person name="Parada L.F."/>
            <person name="Chao M.V."/>
        </authorList>
    </citation>
    <scope>FUNCTION AS RECEPTOR FOR NGF</scope>
    <scope>SUBCELLULAR LOCATION</scope>
</reference>
<reference key="4">
    <citation type="journal article" date="1994" name="Neuron">
        <title>Trk receptors use redundant signal transduction pathways involving SHC and PLC-gamma 1 to mediate NGF responses.</title>
        <authorList>
            <person name="Stephens R.M."/>
            <person name="Loeb D.M."/>
            <person name="Copeland T.D."/>
            <person name="Pawson T."/>
            <person name="Greene L.A."/>
            <person name="Kaplan D.R."/>
        </authorList>
    </citation>
    <scope>INTERACTION WITH SHC1</scope>
</reference>
<reference key="5">
    <citation type="journal article" date="1998" name="Neuron">
        <title>Identification and characterization of novel substrates of Trk receptors in developing neurons.</title>
        <authorList>
            <person name="Qian X."/>
            <person name="Riccio A."/>
            <person name="Zhang Y."/>
            <person name="Ginty D.D."/>
        </authorList>
    </citation>
    <scope>INTERACTION WITH PLCG1; SHC1; SH2B1 AND SH2B2</scope>
    <scope>MUTAGENESIS OF VAL-527</scope>
</reference>
<reference key="6">
    <citation type="journal article" date="2001" name="J. Biol. Chem.">
        <title>The atypical protein kinase C-interacting protein p62 is a scaffold for NF-kappaB activation by nerve growth factor.</title>
        <authorList>
            <person name="Wooten M.W."/>
            <person name="Seibenhener M.L."/>
            <person name="Mamidipudi V."/>
            <person name="Diaz-Meco M.T."/>
            <person name="Barker P.A."/>
            <person name="Moscat J."/>
        </authorList>
    </citation>
    <scope>INTERACTION WITH SQSTM1</scope>
</reference>
<reference key="7">
    <citation type="journal article" date="2001" name="J. Neurosci.">
        <title>An evolutionarily conserved transmembrane protein that is a novel downstream target of neurotrophin and ephrin receptors.</title>
        <authorList>
            <person name="Kong H."/>
            <person name="Boulter J."/>
            <person name="Weber J.L."/>
            <person name="Lai C."/>
            <person name="Chao M.V."/>
        </authorList>
    </citation>
    <scope>INTERACTION WITH KIDINS220</scope>
</reference>
<reference key="8">
    <citation type="journal article" date="2003" name="J. Biol. Chem.">
        <title>Association of the atypical protein kinase C-interacting protein p62/ZIP with nerve growth factor receptor TrkA regulates receptor trafficking and Erk5 signaling.</title>
        <authorList>
            <person name="Geetha T."/>
            <person name="Wooten M.W."/>
        </authorList>
    </citation>
    <scope>INTERACTION WITH SQSTM1</scope>
    <scope>SUBCELLULAR LOCATION</scope>
    <scope>DOMAIN</scope>
</reference>
<reference key="9">
    <citation type="journal article" date="2004" name="EMBO J.">
        <title>A unique pathway for sustained neurotrophin signaling through an ankyrin-rich membrane-spanning protein.</title>
        <authorList>
            <person name="Arevalo J.C."/>
            <person name="Yano H."/>
            <person name="Teng K.K."/>
            <person name="Chao M.V."/>
        </authorList>
    </citation>
    <scope>INTERACTION WITH KIDINS220</scope>
    <scope>DOMAIN</scope>
</reference>
<reference key="10">
    <citation type="journal article" date="2004" name="J. Neurosci. Res.">
        <title>Ternary complex with Trk, p75, and an ankyrin-rich membrane spanning protein.</title>
        <authorList>
            <person name="Chang M.-S."/>
            <person name="Arevalo J.C."/>
            <person name="Chao M.V."/>
        </authorList>
    </citation>
    <scope>INTERACTION WITH NGFR AND KIDINS220</scope>
    <scope>DOMAIN</scope>
</reference>
<reference key="11">
    <citation type="journal article" date="2005" name="J. Biol. Chem.">
        <title>SLAM-associated protein as a potential negative regulator in Trk signaling.</title>
        <authorList>
            <person name="Lo K.Y."/>
            <person name="Chin W.H."/>
            <person name="Ng Y.P."/>
            <person name="Cheng A.W."/>
            <person name="Cheung Z.H."/>
            <person name="Ip N.Y."/>
        </authorList>
    </citation>
    <scope>ACTIVITY REGULATION</scope>
    <scope>INTERACTION WITH SH2D1A</scope>
</reference>
<reference key="12">
    <citation type="journal article" date="2005" name="J. Neurosci.">
        <title>The small GTPase Rab7 controls the endosomal trafficking and neuritogenic signaling of the nerve growth factor receptor TrkA.</title>
        <authorList>
            <person name="Saxena S."/>
            <person name="Bucci C."/>
            <person name="Weis J."/>
            <person name="Kruttgen A."/>
        </authorList>
    </citation>
    <scope>INTERACTION WITH RAB7A</scope>
    <scope>SUBCELLULAR LOCATION</scope>
</reference>
<reference key="13">
    <citation type="journal article" date="2007" name="Biochim. Biophys. Acta">
        <title>PTPsigma binds and dephosphorylates neurotrophin receptors and can suppress NGF-dependent neurite outgrowth from sensory neurons.</title>
        <authorList>
            <person name="Faux C."/>
            <person name="Hawadle M."/>
            <person name="Nixon J."/>
            <person name="Wallace A."/>
            <person name="Lee S."/>
            <person name="Murray S."/>
            <person name="Stoker A."/>
        </authorList>
    </citation>
    <scope>INTERACTION WITH PTPRS</scope>
</reference>
<reference key="14">
    <citation type="journal article" date="2007" name="J. Cell Biol.">
        <title>Rap1-PDZ-GEF1 interacts with a neurotrophin receptor at late endosomes, leading to sustained activation of Rap1 and ERK and neurite outgrowth.</title>
        <authorList>
            <person name="Hisata S."/>
            <person name="Sakisaka T."/>
            <person name="Baba T."/>
            <person name="Yamada T."/>
            <person name="Aoki K."/>
            <person name="Matsuda M."/>
            <person name="Takai Y."/>
        </authorList>
    </citation>
    <scope>IDENTIFICATION IN A COMPLEX WITH KIDINS220; MAGI2 AND RAPGEF2</scope>
    <scope>INTERACTION WITH RAPGEF2</scope>
    <scope>SUBCELLULAR LOCATION</scope>
</reference>
<reference key="15">
    <citation type="journal article" date="2008" name="J. Neurochem.">
        <title>Neurotrophin receptor homolog-2 regulates nerve growth factor signaling.</title>
        <authorList>
            <person name="Wong A.W."/>
            <person name="Willingham M."/>
            <person name="Xiao J."/>
            <person name="Kilpatrick T.J."/>
            <person name="Murray S.S."/>
        </authorList>
    </citation>
    <scope>INTERACTION WITH NRADD</scope>
</reference>
<reference key="16">
    <citation type="journal article" date="2010" name="Nature">
        <title>Neurotrophin receptors TrkA and TrkC cause neuronal death whereas TrkB does not.</title>
        <authorList>
            <person name="Nikoletopoulou V."/>
            <person name="Lickert H."/>
            <person name="Frade J.M."/>
            <person name="Rencurel C."/>
            <person name="Giallonardo P."/>
            <person name="Zhang L."/>
            <person name="Bibel M."/>
            <person name="Barde Y.A."/>
        </authorList>
    </citation>
    <scope>FUNCTION IN CELL DEATH</scope>
</reference>
<reference key="17">
    <citation type="journal article" date="2015" name="Mol. Biol. Cell">
        <title>GGA3 mediates TrkA endocytic recycling to promote sustained Akt phosphorylation and cell survival.</title>
        <authorList>
            <person name="Li X."/>
            <person name="Lavigne P."/>
            <person name="Lavoie C."/>
        </authorList>
    </citation>
    <scope>INTERACTION WITH GGA3</scope>
    <scope>SUBCELLULAR LOCATION</scope>
</reference>
<reference key="18">
    <citation type="journal article" date="2020" name="Cell. Mol. Life Sci.">
        <title>Tetraspanin1 promotes NGF signaling by controlling TrkA receptor proteostasis.</title>
        <authorList>
            <person name="Ferrero Restelli F."/>
            <person name="Fontanet P.A."/>
            <person name="De Vincenti A.P."/>
            <person name="Falzone T.L."/>
            <person name="Ledda F."/>
            <person name="Paratcha G."/>
        </authorList>
    </citation>
    <scope>FUNCTION</scope>
    <scope>SUBCELLULAR LOCATION</scope>
    <scope>INTERACTION WITH NTRK1/TRKA</scope>
</reference>
<gene>
    <name type="primary">Ntrk1</name>
    <name type="synonym">Trk</name>
    <name type="synonym">Trka</name>
</gene>
<keyword id="KW-0025">Alternative splicing</keyword>
<keyword id="KW-0067">ATP-binding</keyword>
<keyword id="KW-1003">Cell membrane</keyword>
<keyword id="KW-0217">Developmental protein</keyword>
<keyword id="KW-0221">Differentiation</keyword>
<keyword id="KW-1015">Disulfide bond</keyword>
<keyword id="KW-0967">Endosome</keyword>
<keyword id="KW-0325">Glycoprotein</keyword>
<keyword id="KW-0393">Immunoglobulin domain</keyword>
<keyword id="KW-0418">Kinase</keyword>
<keyword id="KW-0433">Leucine-rich repeat</keyword>
<keyword id="KW-0472">Membrane</keyword>
<keyword id="KW-0524">Neurogenesis</keyword>
<keyword id="KW-0547">Nucleotide-binding</keyword>
<keyword id="KW-0597">Phosphoprotein</keyword>
<keyword id="KW-0675">Receptor</keyword>
<keyword id="KW-1185">Reference proteome</keyword>
<keyword id="KW-0677">Repeat</keyword>
<keyword id="KW-0732">Signal</keyword>
<keyword id="KW-0808">Transferase</keyword>
<keyword id="KW-0812">Transmembrane</keyword>
<keyword id="KW-1133">Transmembrane helix</keyword>
<keyword id="KW-0829">Tyrosine-protein kinase</keyword>
<keyword id="KW-0832">Ubl conjugation</keyword>
<organism>
    <name type="scientific">Rattus norvegicus</name>
    <name type="common">Rat</name>
    <dbReference type="NCBI Taxonomy" id="10116"/>
    <lineage>
        <taxon>Eukaryota</taxon>
        <taxon>Metazoa</taxon>
        <taxon>Chordata</taxon>
        <taxon>Craniata</taxon>
        <taxon>Vertebrata</taxon>
        <taxon>Euteleostomi</taxon>
        <taxon>Mammalia</taxon>
        <taxon>Eutheria</taxon>
        <taxon>Euarchontoglires</taxon>
        <taxon>Glires</taxon>
        <taxon>Rodentia</taxon>
        <taxon>Myomorpha</taxon>
        <taxon>Muroidea</taxon>
        <taxon>Muridae</taxon>
        <taxon>Murinae</taxon>
        <taxon>Rattus</taxon>
    </lineage>
</organism>
<dbReference type="EC" id="2.7.10.1"/>
<dbReference type="EMBL" id="M85214">
    <property type="protein sequence ID" value="AAA42286.1"/>
    <property type="molecule type" value="mRNA"/>
</dbReference>
<dbReference type="EMBL" id="L12225">
    <property type="status" value="NOT_ANNOTATED_CDS"/>
    <property type="molecule type" value="Genomic_DNA"/>
</dbReference>
<dbReference type="PIR" id="A41981">
    <property type="entry name" value="TVRTTB"/>
</dbReference>
<dbReference type="RefSeq" id="NP_067600.1">
    <molecule id="P35739-1"/>
    <property type="nucleotide sequence ID" value="NM_021589.1"/>
</dbReference>
<dbReference type="RefSeq" id="XP_038958932.1">
    <molecule id="P35739-2"/>
    <property type="nucleotide sequence ID" value="XM_039103004.2"/>
</dbReference>
<dbReference type="SMR" id="P35739"/>
<dbReference type="BioGRID" id="248731">
    <property type="interactions" value="24"/>
</dbReference>
<dbReference type="CORUM" id="P35739"/>
<dbReference type="DIP" id="DIP-5716N"/>
<dbReference type="FunCoup" id="P35739">
    <property type="interactions" value="992"/>
</dbReference>
<dbReference type="IntAct" id="P35739">
    <property type="interactions" value="7"/>
</dbReference>
<dbReference type="MINT" id="P35739"/>
<dbReference type="STRING" id="10116.ENSRNOP00000018961"/>
<dbReference type="BindingDB" id="P35739"/>
<dbReference type="ChEMBL" id="CHEMBL4220"/>
<dbReference type="GlyCosmos" id="P35739">
    <property type="glycosylation" value="11 sites, No reported glycans"/>
</dbReference>
<dbReference type="GlyGen" id="P35739">
    <property type="glycosylation" value="11 sites"/>
</dbReference>
<dbReference type="iPTMnet" id="P35739"/>
<dbReference type="PhosphoSitePlus" id="P35739"/>
<dbReference type="PaxDb" id="10116-ENSRNOP00000018961"/>
<dbReference type="Ensembl" id="ENSRNOT00000018961.4">
    <molecule id="P35739-2"/>
    <property type="protein sequence ID" value="ENSRNOP00000018961.2"/>
    <property type="gene ID" value="ENSRNOG00000013953.9"/>
</dbReference>
<dbReference type="Ensembl" id="ENSRNOT00000115670.1">
    <molecule id="P35739-1"/>
    <property type="protein sequence ID" value="ENSRNOP00000079821.1"/>
    <property type="gene ID" value="ENSRNOG00000013953.9"/>
</dbReference>
<dbReference type="GeneID" id="59109"/>
<dbReference type="KEGG" id="rno:59109"/>
<dbReference type="UCSC" id="RGD:620144">
    <molecule id="P35739-1"/>
    <property type="organism name" value="rat"/>
</dbReference>
<dbReference type="AGR" id="RGD:620144"/>
<dbReference type="CTD" id="4914"/>
<dbReference type="RGD" id="620144">
    <property type="gene designation" value="Ntrk1"/>
</dbReference>
<dbReference type="eggNOG" id="KOG1026">
    <property type="taxonomic scope" value="Eukaryota"/>
</dbReference>
<dbReference type="GeneTree" id="ENSGT00940000159412"/>
<dbReference type="HOGENOM" id="CLU_000288_74_1_1"/>
<dbReference type="InParanoid" id="P35739"/>
<dbReference type="OMA" id="LTCHISA"/>
<dbReference type="OrthoDB" id="10005095at2759"/>
<dbReference type="PhylomeDB" id="P35739"/>
<dbReference type="TreeFam" id="TF106465"/>
<dbReference type="BRENDA" id="2.7.10.1">
    <property type="organism ID" value="5301"/>
</dbReference>
<dbReference type="Reactome" id="R-RNO-170968">
    <property type="pathway name" value="Frs2-mediated activation"/>
</dbReference>
<dbReference type="Reactome" id="R-RNO-170984">
    <property type="pathway name" value="ARMS-mediated activation"/>
</dbReference>
<dbReference type="Reactome" id="R-RNO-177504">
    <property type="pathway name" value="Retrograde neurotrophin signalling"/>
</dbReference>
<dbReference type="Reactome" id="R-RNO-187042">
    <property type="pathway name" value="TRKA activation by NGF"/>
</dbReference>
<dbReference type="Reactome" id="R-RNO-198203">
    <property type="pathway name" value="PI3K/AKT activation"/>
</dbReference>
<dbReference type="PRO" id="PR:P35739"/>
<dbReference type="Proteomes" id="UP000002494">
    <property type="component" value="Chromosome 2"/>
</dbReference>
<dbReference type="Bgee" id="ENSRNOG00000013953">
    <property type="expression patterns" value="Expressed in kidney and 10 other cell types or tissues"/>
</dbReference>
<dbReference type="ExpressionAtlas" id="P35739">
    <property type="expression patterns" value="baseline and differential"/>
</dbReference>
<dbReference type="GO" id="GO:0030424">
    <property type="term" value="C:axon"/>
    <property type="evidence" value="ECO:0000314"/>
    <property type="project" value="RGD"/>
</dbReference>
<dbReference type="GO" id="GO:0009986">
    <property type="term" value="C:cell surface"/>
    <property type="evidence" value="ECO:0000314"/>
    <property type="project" value="MGI"/>
</dbReference>
<dbReference type="GO" id="GO:0005737">
    <property type="term" value="C:cytoplasm"/>
    <property type="evidence" value="ECO:0000266"/>
    <property type="project" value="RGD"/>
</dbReference>
<dbReference type="GO" id="GO:0030425">
    <property type="term" value="C:dendrite"/>
    <property type="evidence" value="ECO:0000314"/>
    <property type="project" value="RGD"/>
</dbReference>
<dbReference type="GO" id="GO:0005769">
    <property type="term" value="C:early endosome"/>
    <property type="evidence" value="ECO:0000314"/>
    <property type="project" value="UniProtKB"/>
</dbReference>
<dbReference type="GO" id="GO:0031901">
    <property type="term" value="C:early endosome membrane"/>
    <property type="evidence" value="ECO:0007669"/>
    <property type="project" value="UniProtKB-SubCell"/>
</dbReference>
<dbReference type="GO" id="GO:0000139">
    <property type="term" value="C:Golgi membrane"/>
    <property type="evidence" value="ECO:0000304"/>
    <property type="project" value="Reactome"/>
</dbReference>
<dbReference type="GO" id="GO:0005770">
    <property type="term" value="C:late endosome"/>
    <property type="evidence" value="ECO:0000314"/>
    <property type="project" value="UniProtKB"/>
</dbReference>
<dbReference type="GO" id="GO:0031902">
    <property type="term" value="C:late endosome membrane"/>
    <property type="evidence" value="ECO:0007669"/>
    <property type="project" value="UniProtKB-SubCell"/>
</dbReference>
<dbReference type="GO" id="GO:0005739">
    <property type="term" value="C:mitochondrion"/>
    <property type="evidence" value="ECO:0000314"/>
    <property type="project" value="RGD"/>
</dbReference>
<dbReference type="GO" id="GO:0043025">
    <property type="term" value="C:neuronal cell body"/>
    <property type="evidence" value="ECO:0000314"/>
    <property type="project" value="RGD"/>
</dbReference>
<dbReference type="GO" id="GO:0005886">
    <property type="term" value="C:plasma membrane"/>
    <property type="evidence" value="ECO:0000314"/>
    <property type="project" value="UniProtKB"/>
</dbReference>
<dbReference type="GO" id="GO:0032991">
    <property type="term" value="C:protein-containing complex"/>
    <property type="evidence" value="ECO:0000314"/>
    <property type="project" value="UniProtKB"/>
</dbReference>
<dbReference type="GO" id="GO:0043235">
    <property type="term" value="C:receptor complex"/>
    <property type="evidence" value="ECO:0000266"/>
    <property type="project" value="RGD"/>
</dbReference>
<dbReference type="GO" id="GO:0055037">
    <property type="term" value="C:recycling endosome"/>
    <property type="evidence" value="ECO:0000314"/>
    <property type="project" value="UniProtKB"/>
</dbReference>
<dbReference type="GO" id="GO:0055038">
    <property type="term" value="C:recycling endosome membrane"/>
    <property type="evidence" value="ECO:0007669"/>
    <property type="project" value="UniProtKB-SubCell"/>
</dbReference>
<dbReference type="GO" id="GO:0005524">
    <property type="term" value="F:ATP binding"/>
    <property type="evidence" value="ECO:0007669"/>
    <property type="project" value="UniProtKB-KW"/>
</dbReference>
<dbReference type="GO" id="GO:0005004">
    <property type="term" value="F:GPI-linked ephrin receptor activity"/>
    <property type="evidence" value="ECO:0000314"/>
    <property type="project" value="BHF-UCL"/>
</dbReference>
<dbReference type="GO" id="GO:0042802">
    <property type="term" value="F:identical protein binding"/>
    <property type="evidence" value="ECO:0000266"/>
    <property type="project" value="RGD"/>
</dbReference>
<dbReference type="GO" id="GO:0019900">
    <property type="term" value="F:kinase binding"/>
    <property type="evidence" value="ECO:0000353"/>
    <property type="project" value="RGD"/>
</dbReference>
<dbReference type="GO" id="GO:0048406">
    <property type="term" value="F:nerve growth factor binding"/>
    <property type="evidence" value="ECO:0000314"/>
    <property type="project" value="RGD"/>
</dbReference>
<dbReference type="GO" id="GO:0010465">
    <property type="term" value="F:nerve growth factor receptor activity"/>
    <property type="evidence" value="ECO:0000250"/>
    <property type="project" value="UniProtKB"/>
</dbReference>
<dbReference type="GO" id="GO:0043121">
    <property type="term" value="F:neurotrophin binding"/>
    <property type="evidence" value="ECO:0000318"/>
    <property type="project" value="GO_Central"/>
</dbReference>
<dbReference type="GO" id="GO:0005166">
    <property type="term" value="F:neurotrophin p75 receptor binding"/>
    <property type="evidence" value="ECO:0000353"/>
    <property type="project" value="RGD"/>
</dbReference>
<dbReference type="GO" id="GO:0005030">
    <property type="term" value="F:neurotrophin receptor activity"/>
    <property type="evidence" value="ECO:0000318"/>
    <property type="project" value="GO_Central"/>
</dbReference>
<dbReference type="GO" id="GO:0042803">
    <property type="term" value="F:protein homodimerization activity"/>
    <property type="evidence" value="ECO:0000250"/>
    <property type="project" value="UniProtKB"/>
</dbReference>
<dbReference type="GO" id="GO:0004713">
    <property type="term" value="F:protein tyrosine kinase activity"/>
    <property type="evidence" value="ECO:0000314"/>
    <property type="project" value="MGI"/>
</dbReference>
<dbReference type="GO" id="GO:0004675">
    <property type="term" value="F:transmembrane receptor protein serine/threonine kinase activity"/>
    <property type="evidence" value="ECO:0000304"/>
    <property type="project" value="Reactome"/>
</dbReference>
<dbReference type="GO" id="GO:0004714">
    <property type="term" value="F:transmembrane receptor protein tyrosine kinase activity"/>
    <property type="evidence" value="ECO:0000250"/>
    <property type="project" value="UniProtKB"/>
</dbReference>
<dbReference type="GO" id="GO:0007411">
    <property type="term" value="P:axon guidance"/>
    <property type="evidence" value="ECO:0000315"/>
    <property type="project" value="RGD"/>
</dbReference>
<dbReference type="GO" id="GO:0060385">
    <property type="term" value="P:axonogenesis involved in innervation"/>
    <property type="evidence" value="ECO:0000250"/>
    <property type="project" value="UniProtKB"/>
</dbReference>
<dbReference type="GO" id="GO:0030183">
    <property type="term" value="P:B cell differentiation"/>
    <property type="evidence" value="ECO:0000266"/>
    <property type="project" value="RGD"/>
</dbReference>
<dbReference type="GO" id="GO:0061368">
    <property type="term" value="P:behavioral response to formalin induced pain"/>
    <property type="evidence" value="ECO:0000266"/>
    <property type="project" value="RGD"/>
</dbReference>
<dbReference type="GO" id="GO:0007169">
    <property type="term" value="P:cell surface receptor protein tyrosine kinase signaling pathway"/>
    <property type="evidence" value="ECO:0000318"/>
    <property type="project" value="GO_Central"/>
</dbReference>
<dbReference type="GO" id="GO:0071363">
    <property type="term" value="P:cellular response to growth factor stimulus"/>
    <property type="evidence" value="ECO:0000314"/>
    <property type="project" value="MGI"/>
</dbReference>
<dbReference type="GO" id="GO:1990090">
    <property type="term" value="P:cellular response to nerve growth factor stimulus"/>
    <property type="evidence" value="ECO:0000314"/>
    <property type="project" value="UniProtKB"/>
</dbReference>
<dbReference type="GO" id="GO:0071316">
    <property type="term" value="P:cellular response to nicotine"/>
    <property type="evidence" value="ECO:0000314"/>
    <property type="project" value="RGD"/>
</dbReference>
<dbReference type="GO" id="GO:0007623">
    <property type="term" value="P:circadian rhythm"/>
    <property type="evidence" value="ECO:0000266"/>
    <property type="project" value="RGD"/>
</dbReference>
<dbReference type="GO" id="GO:0050966">
    <property type="term" value="P:detection of mechanical stimulus involved in sensory perception of pain"/>
    <property type="evidence" value="ECO:0000315"/>
    <property type="project" value="RGD"/>
</dbReference>
<dbReference type="GO" id="GO:0050965">
    <property type="term" value="P:detection of temperature stimulus involved in sensory perception of pain"/>
    <property type="evidence" value="ECO:0000315"/>
    <property type="project" value="RGD"/>
</dbReference>
<dbReference type="GO" id="GO:0060384">
    <property type="term" value="P:innervation"/>
    <property type="evidence" value="ECO:0000266"/>
    <property type="project" value="RGD"/>
</dbReference>
<dbReference type="GO" id="GO:0007611">
    <property type="term" value="P:learning or memory"/>
    <property type="evidence" value="ECO:0000315"/>
    <property type="project" value="RGD"/>
</dbReference>
<dbReference type="GO" id="GO:0042490">
    <property type="term" value="P:mechanoreceptor differentiation"/>
    <property type="evidence" value="ECO:0000266"/>
    <property type="project" value="RGD"/>
</dbReference>
<dbReference type="GO" id="GO:0008285">
    <property type="term" value="P:negative regulation of cell population proliferation"/>
    <property type="evidence" value="ECO:0000250"/>
    <property type="project" value="UniProtKB"/>
</dbReference>
<dbReference type="GO" id="GO:0043524">
    <property type="term" value="P:negative regulation of neuron apoptotic process"/>
    <property type="evidence" value="ECO:0000315"/>
    <property type="project" value="UniProtKB"/>
</dbReference>
<dbReference type="GO" id="GO:0038180">
    <property type="term" value="P:nerve growth factor signaling pathway"/>
    <property type="evidence" value="ECO:0000314"/>
    <property type="project" value="UniProtKB"/>
</dbReference>
<dbReference type="GO" id="GO:0007399">
    <property type="term" value="P:nervous system development"/>
    <property type="evidence" value="ECO:0000266"/>
    <property type="project" value="RGD"/>
</dbReference>
<dbReference type="GO" id="GO:0051402">
    <property type="term" value="P:neuron apoptotic process"/>
    <property type="evidence" value="ECO:0000266"/>
    <property type="project" value="RGD"/>
</dbReference>
<dbReference type="GO" id="GO:0048011">
    <property type="term" value="P:neurotrophin TRK receptor signaling pathway"/>
    <property type="evidence" value="ECO:0000250"/>
    <property type="project" value="UniProtKB"/>
</dbReference>
<dbReference type="GO" id="GO:0021553">
    <property type="term" value="P:olfactory nerve development"/>
    <property type="evidence" value="ECO:0000270"/>
    <property type="project" value="RGD"/>
</dbReference>
<dbReference type="GO" id="GO:0038083">
    <property type="term" value="P:peptidyl-tyrosine autophosphorylation"/>
    <property type="evidence" value="ECO:0000250"/>
    <property type="project" value="UniProtKB"/>
</dbReference>
<dbReference type="GO" id="GO:0070374">
    <property type="term" value="P:positive regulation of ERK1 and ERK2 cascade"/>
    <property type="evidence" value="ECO:0000250"/>
    <property type="project" value="UniProtKB"/>
</dbReference>
<dbReference type="GO" id="GO:0043547">
    <property type="term" value="P:positive regulation of GTPase activity"/>
    <property type="evidence" value="ECO:0000250"/>
    <property type="project" value="UniProtKB"/>
</dbReference>
<dbReference type="GO" id="GO:0010976">
    <property type="term" value="P:positive regulation of neuron projection development"/>
    <property type="evidence" value="ECO:0000250"/>
    <property type="project" value="UniProtKB"/>
</dbReference>
<dbReference type="GO" id="GO:0051092">
    <property type="term" value="P:positive regulation of NF-kappaB transcription factor activity"/>
    <property type="evidence" value="ECO:0000250"/>
    <property type="project" value="UniProtKB"/>
</dbReference>
<dbReference type="GO" id="GO:0051897">
    <property type="term" value="P:positive regulation of phosphatidylinositol 3-kinase/protein kinase B signal transduction"/>
    <property type="evidence" value="ECO:0000314"/>
    <property type="project" value="BHF-UCL"/>
</dbReference>
<dbReference type="GO" id="GO:0043068">
    <property type="term" value="P:positive regulation of programmed cell death"/>
    <property type="evidence" value="ECO:0000314"/>
    <property type="project" value="UniProtKB"/>
</dbReference>
<dbReference type="GO" id="GO:0046579">
    <property type="term" value="P:positive regulation of Ras protein signal transduction"/>
    <property type="evidence" value="ECO:0000250"/>
    <property type="project" value="UniProtKB"/>
</dbReference>
<dbReference type="GO" id="GO:0051965">
    <property type="term" value="P:positive regulation of synapse assembly"/>
    <property type="evidence" value="ECO:0000266"/>
    <property type="project" value="RGD"/>
</dbReference>
<dbReference type="GO" id="GO:0051968">
    <property type="term" value="P:positive regulation of synaptic transmission, glutamatergic"/>
    <property type="evidence" value="ECO:0000315"/>
    <property type="project" value="RGD"/>
</dbReference>
<dbReference type="GO" id="GO:0010623">
    <property type="term" value="P:programmed cell death involved in cell development"/>
    <property type="evidence" value="ECO:0000314"/>
    <property type="project" value="UniProtKB"/>
</dbReference>
<dbReference type="GO" id="GO:0046777">
    <property type="term" value="P:protein autophosphorylation"/>
    <property type="evidence" value="ECO:0000314"/>
    <property type="project" value="MGI"/>
</dbReference>
<dbReference type="GO" id="GO:0006468">
    <property type="term" value="P:protein phosphorylation"/>
    <property type="evidence" value="ECO:0000250"/>
    <property type="project" value="UniProtKB"/>
</dbReference>
<dbReference type="GO" id="GO:0048678">
    <property type="term" value="P:response to axon injury"/>
    <property type="evidence" value="ECO:0000270"/>
    <property type="project" value="RGD"/>
</dbReference>
<dbReference type="GO" id="GO:0051602">
    <property type="term" value="P:response to electrical stimulus"/>
    <property type="evidence" value="ECO:0000314"/>
    <property type="project" value="RGD"/>
</dbReference>
<dbReference type="GO" id="GO:0051599">
    <property type="term" value="P:response to hydrostatic pressure"/>
    <property type="evidence" value="ECO:0000270"/>
    <property type="project" value="RGD"/>
</dbReference>
<dbReference type="GO" id="GO:0035094">
    <property type="term" value="P:response to nicotine"/>
    <property type="evidence" value="ECO:0000314"/>
    <property type="project" value="RGD"/>
</dbReference>
<dbReference type="GO" id="GO:0031667">
    <property type="term" value="P:response to nutrient levels"/>
    <property type="evidence" value="ECO:0000314"/>
    <property type="project" value="RGD"/>
</dbReference>
<dbReference type="GO" id="GO:0009410">
    <property type="term" value="P:response to xenobiotic stimulus"/>
    <property type="evidence" value="ECO:0000314"/>
    <property type="project" value="RGD"/>
</dbReference>
<dbReference type="GO" id="GO:0060009">
    <property type="term" value="P:Sertoli cell development"/>
    <property type="evidence" value="ECO:0000315"/>
    <property type="project" value="RGD"/>
</dbReference>
<dbReference type="GO" id="GO:0007283">
    <property type="term" value="P:spermatogenesis"/>
    <property type="evidence" value="ECO:0000270"/>
    <property type="project" value="RGD"/>
</dbReference>
<dbReference type="GO" id="GO:0048485">
    <property type="term" value="P:sympathetic nervous system development"/>
    <property type="evidence" value="ECO:0000250"/>
    <property type="project" value="UniProtKB"/>
</dbReference>
<dbReference type="CDD" id="cd04971">
    <property type="entry name" value="IgI_TrKABC_d5"/>
    <property type="match status" value="1"/>
</dbReference>
<dbReference type="FunFam" id="1.10.510.10:FF:000034">
    <property type="entry name" value="Tyrosine-protein kinase receptor"/>
    <property type="match status" value="1"/>
</dbReference>
<dbReference type="FunFam" id="2.60.40.10:FF:000522">
    <property type="entry name" value="Tyrosine-protein kinase receptor"/>
    <property type="match status" value="1"/>
</dbReference>
<dbReference type="FunFam" id="2.60.40.10:FF:000664">
    <property type="entry name" value="Tyrosine-protein kinase receptor"/>
    <property type="match status" value="1"/>
</dbReference>
<dbReference type="FunFam" id="3.30.200.20:FF:000033">
    <property type="entry name" value="Tyrosine-protein kinase receptor"/>
    <property type="match status" value="1"/>
</dbReference>
<dbReference type="FunFam" id="3.80.10.10:FF:000163">
    <property type="entry name" value="Tyrosine-protein kinase receptor"/>
    <property type="match status" value="1"/>
</dbReference>
<dbReference type="Gene3D" id="2.60.40.10">
    <property type="entry name" value="Immunoglobulins"/>
    <property type="match status" value="2"/>
</dbReference>
<dbReference type="Gene3D" id="3.30.200.20">
    <property type="entry name" value="Phosphorylase Kinase, domain 1"/>
    <property type="match status" value="1"/>
</dbReference>
<dbReference type="Gene3D" id="3.80.10.10">
    <property type="entry name" value="Ribonuclease Inhibitor"/>
    <property type="match status" value="1"/>
</dbReference>
<dbReference type="Gene3D" id="1.10.510.10">
    <property type="entry name" value="Transferase(Phosphotransferase) domain 1"/>
    <property type="match status" value="1"/>
</dbReference>
<dbReference type="InterPro" id="IPR007110">
    <property type="entry name" value="Ig-like_dom"/>
</dbReference>
<dbReference type="InterPro" id="IPR036179">
    <property type="entry name" value="Ig-like_dom_sf"/>
</dbReference>
<dbReference type="InterPro" id="IPR013783">
    <property type="entry name" value="Ig-like_fold"/>
</dbReference>
<dbReference type="InterPro" id="IPR013098">
    <property type="entry name" value="Ig_I-set"/>
</dbReference>
<dbReference type="InterPro" id="IPR003599">
    <property type="entry name" value="Ig_sub"/>
</dbReference>
<dbReference type="InterPro" id="IPR011009">
    <property type="entry name" value="Kinase-like_dom_sf"/>
</dbReference>
<dbReference type="InterPro" id="IPR001611">
    <property type="entry name" value="Leu-rich_rpt"/>
</dbReference>
<dbReference type="InterPro" id="IPR032675">
    <property type="entry name" value="LRR_dom_sf"/>
</dbReference>
<dbReference type="InterPro" id="IPR020777">
    <property type="entry name" value="NTRK"/>
</dbReference>
<dbReference type="InterPro" id="IPR020461">
    <property type="entry name" value="NTRK1"/>
</dbReference>
<dbReference type="InterPro" id="IPR031635">
    <property type="entry name" value="NTRK_LRRCT"/>
</dbReference>
<dbReference type="InterPro" id="IPR000719">
    <property type="entry name" value="Prot_kinase_dom"/>
</dbReference>
<dbReference type="InterPro" id="IPR017441">
    <property type="entry name" value="Protein_kinase_ATP_BS"/>
</dbReference>
<dbReference type="InterPro" id="IPR050122">
    <property type="entry name" value="RTK"/>
</dbReference>
<dbReference type="InterPro" id="IPR001245">
    <property type="entry name" value="Ser-Thr/Tyr_kinase_cat_dom"/>
</dbReference>
<dbReference type="InterPro" id="IPR008266">
    <property type="entry name" value="Tyr_kinase_AS"/>
</dbReference>
<dbReference type="InterPro" id="IPR020635">
    <property type="entry name" value="Tyr_kinase_cat_dom"/>
</dbReference>
<dbReference type="InterPro" id="IPR002011">
    <property type="entry name" value="Tyr_kinase_rcpt_2_CS"/>
</dbReference>
<dbReference type="PANTHER" id="PTHR24416:SF370">
    <property type="entry name" value="HIGH AFFINITY NERVE GROWTH FACTOR RECEPTOR"/>
    <property type="match status" value="1"/>
</dbReference>
<dbReference type="PANTHER" id="PTHR24416">
    <property type="entry name" value="TYROSINE-PROTEIN KINASE RECEPTOR"/>
    <property type="match status" value="1"/>
</dbReference>
<dbReference type="Pfam" id="PF07679">
    <property type="entry name" value="I-set"/>
    <property type="match status" value="1"/>
</dbReference>
<dbReference type="Pfam" id="PF13855">
    <property type="entry name" value="LRR_8"/>
    <property type="match status" value="1"/>
</dbReference>
<dbReference type="Pfam" id="PF16920">
    <property type="entry name" value="LRRCT_2"/>
    <property type="match status" value="1"/>
</dbReference>
<dbReference type="Pfam" id="PF07714">
    <property type="entry name" value="PK_Tyr_Ser-Thr"/>
    <property type="match status" value="1"/>
</dbReference>
<dbReference type="PRINTS" id="PR01939">
    <property type="entry name" value="NTKRECEPTOR"/>
</dbReference>
<dbReference type="PRINTS" id="PR01940">
    <property type="entry name" value="NTKRECEPTOR1"/>
</dbReference>
<dbReference type="PRINTS" id="PR00109">
    <property type="entry name" value="TYRKINASE"/>
</dbReference>
<dbReference type="SMART" id="SM00409">
    <property type="entry name" value="IG"/>
    <property type="match status" value="1"/>
</dbReference>
<dbReference type="SMART" id="SM00219">
    <property type="entry name" value="TyrKc"/>
    <property type="match status" value="1"/>
</dbReference>
<dbReference type="SUPFAM" id="SSF48726">
    <property type="entry name" value="Immunoglobulin"/>
    <property type="match status" value="2"/>
</dbReference>
<dbReference type="SUPFAM" id="SSF52058">
    <property type="entry name" value="L domain-like"/>
    <property type="match status" value="1"/>
</dbReference>
<dbReference type="SUPFAM" id="SSF56112">
    <property type="entry name" value="Protein kinase-like (PK-like)"/>
    <property type="match status" value="1"/>
</dbReference>
<dbReference type="PROSITE" id="PS50835">
    <property type="entry name" value="IG_LIKE"/>
    <property type="match status" value="1"/>
</dbReference>
<dbReference type="PROSITE" id="PS00107">
    <property type="entry name" value="PROTEIN_KINASE_ATP"/>
    <property type="match status" value="1"/>
</dbReference>
<dbReference type="PROSITE" id="PS50011">
    <property type="entry name" value="PROTEIN_KINASE_DOM"/>
    <property type="match status" value="1"/>
</dbReference>
<dbReference type="PROSITE" id="PS00109">
    <property type="entry name" value="PROTEIN_KINASE_TYR"/>
    <property type="match status" value="1"/>
</dbReference>
<dbReference type="PROSITE" id="PS00239">
    <property type="entry name" value="RECEPTOR_TYR_KIN_II"/>
    <property type="match status" value="1"/>
</dbReference>
<feature type="signal peptide" evidence="4">
    <location>
        <begin position="1"/>
        <end position="32"/>
    </location>
</feature>
<feature type="chain" id="PRO_0000016725" description="High affinity nerve growth factor receptor">
    <location>
        <begin position="33"/>
        <end position="799"/>
    </location>
</feature>
<feature type="topological domain" description="Extracellular" evidence="4">
    <location>
        <begin position="33"/>
        <end position="418"/>
    </location>
</feature>
<feature type="transmembrane region" description="Helical" evidence="4">
    <location>
        <begin position="419"/>
        <end position="442"/>
    </location>
</feature>
<feature type="topological domain" description="Cytoplasmic" evidence="4">
    <location>
        <begin position="443"/>
        <end position="799"/>
    </location>
</feature>
<feature type="repeat" description="LRR 1">
    <location>
        <begin position="90"/>
        <end position="113"/>
    </location>
</feature>
<feature type="repeat" description="LRR 2">
    <location>
        <begin position="116"/>
        <end position="137"/>
    </location>
</feature>
<feature type="domain" description="LRRCT">
    <location>
        <begin position="148"/>
        <end position="219"/>
    </location>
</feature>
<feature type="domain" description="Ig-like C2-type 1">
    <location>
        <begin position="196"/>
        <end position="285"/>
    </location>
</feature>
<feature type="domain" description="Ig-like C2-type 2">
    <location>
        <begin position="295"/>
        <end position="368"/>
    </location>
</feature>
<feature type="domain" description="Protein kinase" evidence="6">
    <location>
        <begin position="513"/>
        <end position="784"/>
    </location>
</feature>
<feature type="region of interest" description="Interaction with SQSTM1">
    <location>
        <begin position="472"/>
        <end position="493"/>
    </location>
</feature>
<feature type="active site" description="Proton acceptor" evidence="6 7">
    <location>
        <position position="653"/>
    </location>
</feature>
<feature type="binding site" evidence="6">
    <location>
        <begin position="519"/>
        <end position="527"/>
    </location>
    <ligand>
        <name>ATP</name>
        <dbReference type="ChEBI" id="CHEBI:30616"/>
    </ligand>
</feature>
<feature type="binding site" evidence="6">
    <location>
        <position position="547"/>
    </location>
    <ligand>
        <name>ATP</name>
        <dbReference type="ChEBI" id="CHEBI:30616"/>
    </ligand>
</feature>
<feature type="site" description="Interaction with SHC1" evidence="1">
    <location>
        <position position="499"/>
    </location>
</feature>
<feature type="site" description="Interaction with PLCG1" evidence="1">
    <location>
        <position position="794"/>
    </location>
</feature>
<feature type="modified residue" description="Phosphotyrosine; by autocatalysis" evidence="2">
    <location>
        <position position="499"/>
    </location>
</feature>
<feature type="modified residue" description="Phosphotyrosine; by autocatalysis" evidence="2">
    <location>
        <position position="679"/>
    </location>
</feature>
<feature type="modified residue" description="Phosphotyrosine; by autocatalysis" evidence="2">
    <location>
        <position position="683"/>
    </location>
</feature>
<feature type="modified residue" description="Phosphotyrosine; by autocatalysis" evidence="2">
    <location>
        <position position="684"/>
    </location>
</feature>
<feature type="modified residue" description="Phosphotyrosine; by autocatalysis" evidence="2">
    <location>
        <position position="794"/>
    </location>
</feature>
<feature type="glycosylation site" description="N-linked (GlcNAc...) asparagine" evidence="4">
    <location>
        <position position="67"/>
    </location>
</feature>
<feature type="glycosylation site" description="N-linked (GlcNAc...) asparagine" evidence="4">
    <location>
        <position position="121"/>
    </location>
</feature>
<feature type="glycosylation site" description="N-linked (GlcNAc...) asparagine" evidence="4">
    <location>
        <position position="190"/>
    </location>
</feature>
<feature type="glycosylation site" description="N-linked (GlcNAc...) asparagine" evidence="4">
    <location>
        <position position="204"/>
    </location>
</feature>
<feature type="glycosylation site" description="N-linked (GlcNAc...) asparagine" evidence="4">
    <location>
        <position position="255"/>
    </location>
</feature>
<feature type="glycosylation site" description="N-linked (GlcNAc...) asparagine" evidence="4">
    <location>
        <position position="264"/>
    </location>
</feature>
<feature type="glycosylation site" description="N-linked (GlcNAc...) asparagine" evidence="4">
    <location>
        <position position="320"/>
    </location>
</feature>
<feature type="glycosylation site" description="N-linked (GlcNAc...) asparagine" evidence="4">
    <location>
        <position position="325"/>
    </location>
</feature>
<feature type="glycosylation site" description="N-linked (GlcNAc...) asparagine" evidence="4">
    <location>
        <position position="341"/>
    </location>
</feature>
<feature type="glycosylation site" description="N-linked (GlcNAc...) asparagine" evidence="4">
    <location>
        <position position="361"/>
    </location>
</feature>
<feature type="glycosylation site" description="N-linked (GlcNAc...) asparagine" evidence="4">
    <location>
        <position position="404"/>
    </location>
</feature>
<feature type="disulfide bond" evidence="2">
    <location>
        <begin position="36"/>
        <end position="41"/>
    </location>
</feature>
<feature type="disulfide bond" evidence="2">
    <location>
        <begin position="40"/>
        <end position="50"/>
    </location>
</feature>
<feature type="disulfide bond" evidence="5">
    <location>
        <begin position="154"/>
        <end position="193"/>
    </location>
</feature>
<feature type="disulfide bond" evidence="5">
    <location>
        <begin position="217"/>
        <end position="267"/>
    </location>
</feature>
<feature type="disulfide bond" evidence="2">
    <location>
        <begin position="302"/>
        <end position="348"/>
    </location>
</feature>
<feature type="splice variant" id="VSP_002900" description="In isoform TrkA-I." evidence="25">
    <location>
        <begin position="396"/>
        <end position="401"/>
    </location>
</feature>
<feature type="mutagenesis site" description="Loss of kinase activity." evidence="24">
    <original>V</original>
    <variation>D</variation>
    <location>
        <position position="527"/>
    </location>
</feature>
<evidence type="ECO:0000250" key="1"/>
<evidence type="ECO:0000250" key="2">
    <source>
        <dbReference type="UniProtKB" id="P04629"/>
    </source>
</evidence>
<evidence type="ECO:0000250" key="3">
    <source>
        <dbReference type="UniProtKB" id="Q3UFB7"/>
    </source>
</evidence>
<evidence type="ECO:0000255" key="4"/>
<evidence type="ECO:0000255" key="5">
    <source>
        <dbReference type="PROSITE-ProRule" id="PRU00114"/>
    </source>
</evidence>
<evidence type="ECO:0000255" key="6">
    <source>
        <dbReference type="PROSITE-ProRule" id="PRU00159"/>
    </source>
</evidence>
<evidence type="ECO:0000255" key="7">
    <source>
        <dbReference type="PROSITE-ProRule" id="PRU10028"/>
    </source>
</evidence>
<evidence type="ECO:0000269" key="8">
    <source>
    </source>
</evidence>
<evidence type="ECO:0000269" key="9">
    <source>
    </source>
</evidence>
<evidence type="ECO:0000269" key="10">
    <source>
    </source>
</evidence>
<evidence type="ECO:0000269" key="11">
    <source>
    </source>
</evidence>
<evidence type="ECO:0000269" key="12">
    <source>
    </source>
</evidence>
<evidence type="ECO:0000269" key="13">
    <source>
    </source>
</evidence>
<evidence type="ECO:0000269" key="14">
    <source>
    </source>
</evidence>
<evidence type="ECO:0000269" key="15">
    <source>
    </source>
</evidence>
<evidence type="ECO:0000269" key="16">
    <source>
    </source>
</evidence>
<evidence type="ECO:0000269" key="17">
    <source>
    </source>
</evidence>
<evidence type="ECO:0000269" key="18">
    <source>
    </source>
</evidence>
<evidence type="ECO:0000269" key="19">
    <source>
    </source>
</evidence>
<evidence type="ECO:0000269" key="20">
    <source>
    </source>
</evidence>
<evidence type="ECO:0000269" key="21">
    <source>
    </source>
</evidence>
<evidence type="ECO:0000269" key="22">
    <source>
    </source>
</evidence>
<evidence type="ECO:0000269" key="23">
    <source>
    </source>
</evidence>
<evidence type="ECO:0000269" key="24">
    <source>
    </source>
</evidence>
<evidence type="ECO:0000305" key="25"/>
<evidence type="ECO:0000305" key="26">
    <source>
    </source>
</evidence>